<keyword id="KW-1185">Reference proteome</keyword>
<keyword id="KW-0687">Ribonucleoprotein</keyword>
<keyword id="KW-0689">Ribosomal protein</keyword>
<keyword id="KW-0694">RNA-binding</keyword>
<keyword id="KW-0699">rRNA-binding</keyword>
<comment type="function">
    <text evidence="1">Binds directly to 16S ribosomal RNA.</text>
</comment>
<comment type="similarity">
    <text evidence="1">Belongs to the bacterial ribosomal protein bS20 family.</text>
</comment>
<dbReference type="EMBL" id="CP000490">
    <property type="protein sequence ID" value="ABL72578.1"/>
    <property type="molecule type" value="Genomic_DNA"/>
</dbReference>
<dbReference type="RefSeq" id="WP_011750739.1">
    <property type="nucleotide sequence ID" value="NC_008687.1"/>
</dbReference>
<dbReference type="SMR" id="A1BAN4"/>
<dbReference type="STRING" id="318586.Pden_4514"/>
<dbReference type="EnsemblBacteria" id="ABL72578">
    <property type="protein sequence ID" value="ABL72578"/>
    <property type="gene ID" value="Pden_4514"/>
</dbReference>
<dbReference type="GeneID" id="93454181"/>
<dbReference type="KEGG" id="pde:Pden_4514"/>
<dbReference type="eggNOG" id="COG0268">
    <property type="taxonomic scope" value="Bacteria"/>
</dbReference>
<dbReference type="HOGENOM" id="CLU_160655_3_0_5"/>
<dbReference type="OrthoDB" id="9807974at2"/>
<dbReference type="Proteomes" id="UP000000361">
    <property type="component" value="Chromosome 2"/>
</dbReference>
<dbReference type="GO" id="GO:0015935">
    <property type="term" value="C:small ribosomal subunit"/>
    <property type="evidence" value="ECO:0007669"/>
    <property type="project" value="TreeGrafter"/>
</dbReference>
<dbReference type="GO" id="GO:0070181">
    <property type="term" value="F:small ribosomal subunit rRNA binding"/>
    <property type="evidence" value="ECO:0007669"/>
    <property type="project" value="TreeGrafter"/>
</dbReference>
<dbReference type="GO" id="GO:0003735">
    <property type="term" value="F:structural constituent of ribosome"/>
    <property type="evidence" value="ECO:0007669"/>
    <property type="project" value="InterPro"/>
</dbReference>
<dbReference type="GO" id="GO:0006412">
    <property type="term" value="P:translation"/>
    <property type="evidence" value="ECO:0007669"/>
    <property type="project" value="UniProtKB-UniRule"/>
</dbReference>
<dbReference type="FunFam" id="1.20.58.110:FF:000001">
    <property type="entry name" value="30S ribosomal protein S20"/>
    <property type="match status" value="1"/>
</dbReference>
<dbReference type="Gene3D" id="1.20.58.110">
    <property type="entry name" value="Ribosomal protein S20"/>
    <property type="match status" value="1"/>
</dbReference>
<dbReference type="HAMAP" id="MF_00500">
    <property type="entry name" value="Ribosomal_bS20"/>
    <property type="match status" value="1"/>
</dbReference>
<dbReference type="InterPro" id="IPR002583">
    <property type="entry name" value="Ribosomal_bS20"/>
</dbReference>
<dbReference type="InterPro" id="IPR036510">
    <property type="entry name" value="Ribosomal_bS20_sf"/>
</dbReference>
<dbReference type="NCBIfam" id="TIGR00029">
    <property type="entry name" value="S20"/>
    <property type="match status" value="1"/>
</dbReference>
<dbReference type="PANTHER" id="PTHR33398">
    <property type="entry name" value="30S RIBOSOMAL PROTEIN S20"/>
    <property type="match status" value="1"/>
</dbReference>
<dbReference type="PANTHER" id="PTHR33398:SF1">
    <property type="entry name" value="SMALL RIBOSOMAL SUBUNIT PROTEIN BS20C"/>
    <property type="match status" value="1"/>
</dbReference>
<dbReference type="Pfam" id="PF01649">
    <property type="entry name" value="Ribosomal_S20p"/>
    <property type="match status" value="1"/>
</dbReference>
<dbReference type="SUPFAM" id="SSF46992">
    <property type="entry name" value="Ribosomal protein S20"/>
    <property type="match status" value="1"/>
</dbReference>
<organism>
    <name type="scientific">Paracoccus denitrificans (strain Pd 1222)</name>
    <dbReference type="NCBI Taxonomy" id="318586"/>
    <lineage>
        <taxon>Bacteria</taxon>
        <taxon>Pseudomonadati</taxon>
        <taxon>Pseudomonadota</taxon>
        <taxon>Alphaproteobacteria</taxon>
        <taxon>Rhodobacterales</taxon>
        <taxon>Paracoccaceae</taxon>
        <taxon>Paracoccus</taxon>
    </lineage>
</organism>
<feature type="chain" id="PRO_1000014620" description="Small ribosomal subunit protein bS20">
    <location>
        <begin position="1"/>
        <end position="89"/>
    </location>
</feature>
<feature type="region of interest" description="Disordered" evidence="2">
    <location>
        <begin position="1"/>
        <end position="25"/>
    </location>
</feature>
<evidence type="ECO:0000255" key="1">
    <source>
        <dbReference type="HAMAP-Rule" id="MF_00500"/>
    </source>
</evidence>
<evidence type="ECO:0000256" key="2">
    <source>
        <dbReference type="SAM" id="MobiDB-lite"/>
    </source>
</evidence>
<evidence type="ECO:0000305" key="3"/>
<sequence>MANTPQSKKRARQLERRTAVNKARRSRIRTFLRKVEEAIASGNAEIAREALNSAQPELMRGVTKGVIHKNTAARKMSRLSARVKALATA</sequence>
<reference key="1">
    <citation type="submission" date="2006-12" db="EMBL/GenBank/DDBJ databases">
        <title>Complete sequence of chromosome 2 of Paracoccus denitrificans PD1222.</title>
        <authorList>
            <person name="Copeland A."/>
            <person name="Lucas S."/>
            <person name="Lapidus A."/>
            <person name="Barry K."/>
            <person name="Detter J.C."/>
            <person name="Glavina del Rio T."/>
            <person name="Hammon N."/>
            <person name="Israni S."/>
            <person name="Dalin E."/>
            <person name="Tice H."/>
            <person name="Pitluck S."/>
            <person name="Munk A.C."/>
            <person name="Brettin T."/>
            <person name="Bruce D."/>
            <person name="Han C."/>
            <person name="Tapia R."/>
            <person name="Gilna P."/>
            <person name="Schmutz J."/>
            <person name="Larimer F."/>
            <person name="Land M."/>
            <person name="Hauser L."/>
            <person name="Kyrpides N."/>
            <person name="Lykidis A."/>
            <person name="Spiro S."/>
            <person name="Richardson D.J."/>
            <person name="Moir J.W.B."/>
            <person name="Ferguson S.J."/>
            <person name="van Spanning R.J.M."/>
            <person name="Richardson P."/>
        </authorList>
    </citation>
    <scope>NUCLEOTIDE SEQUENCE [LARGE SCALE GENOMIC DNA]</scope>
    <source>
        <strain>Pd 1222</strain>
    </source>
</reference>
<gene>
    <name evidence="1" type="primary">rpsT</name>
    <name type="ordered locus">Pden_4514</name>
</gene>
<accession>A1BAN4</accession>
<name>RS20_PARDP</name>
<protein>
    <recommendedName>
        <fullName evidence="1">Small ribosomal subunit protein bS20</fullName>
    </recommendedName>
    <alternativeName>
        <fullName evidence="3">30S ribosomal protein S20</fullName>
    </alternativeName>
</protein>
<proteinExistence type="inferred from homology"/>